<sequence length="389" mass="43586">MPEGPELHLASHFVNETCKGLVFGGCVEKSSVSRNPEVPFESSAYHISALARGKELRLTLSPLPGSQPPQKPLSLVFRFGMSGSFQLVPAEALPRHAHLRFYTAPPAPRLALCFVDIRRFGHWDPGGEWQPGRGPCVLLEYERFRENVLRNLSDKAFDRPICEALLDQRFFNGIGNYLRAEILYRLKIPPFEKARTVLEALQQCRPSPELTLSQKIKAKLQNPDLLELCHLVPKEVVQLGGKGYGPERGEEDFAAFRAWLRCYGVPGMSSLRDRHGRTIWFQGDPGPLAPKGGRSQKKKSQETQLGAEDRKEDLPLSSKSVSRMRRARKHPPKRIAQQSEGAGLQQNQETPTAPEKGKRRGQRASTGHRRRPKTIPDTRPREAGESSAS</sequence>
<name>NEIL1_MOUSE</name>
<proteinExistence type="evidence at transcript level"/>
<accession>Q8K4Q6</accession>
<accession>Q80V58</accession>
<accession>Q9CYT9</accession>
<reference key="1">
    <citation type="journal article" date="2002" name="J. Biol. Chem.">
        <title>A back-up glycosylase in Nth1 knock-out mice is a functional Nei (endonuclease VIII) homologue.</title>
        <authorList>
            <person name="Takao M."/>
            <person name="Kanno S."/>
            <person name="Kobayashi K."/>
            <person name="Zhang Q.-M."/>
            <person name="Yonei S."/>
            <person name="van der Horst G.T.J."/>
            <person name="Yasui A."/>
        </authorList>
    </citation>
    <scope>NUCLEOTIDE SEQUENCE [MRNA] (ISOFORM 1)</scope>
    <scope>FUNCTION</scope>
    <scope>TISSUE SPECIFICITY</scope>
    <source>
        <tissue>Liver</tissue>
    </source>
</reference>
<reference key="2">
    <citation type="journal article" date="2005" name="Science">
        <title>The transcriptional landscape of the mammalian genome.</title>
        <authorList>
            <person name="Carninci P."/>
            <person name="Kasukawa T."/>
            <person name="Katayama S."/>
            <person name="Gough J."/>
            <person name="Frith M.C."/>
            <person name="Maeda N."/>
            <person name="Oyama R."/>
            <person name="Ravasi T."/>
            <person name="Lenhard B."/>
            <person name="Wells C."/>
            <person name="Kodzius R."/>
            <person name="Shimokawa K."/>
            <person name="Bajic V.B."/>
            <person name="Brenner S.E."/>
            <person name="Batalov S."/>
            <person name="Forrest A.R."/>
            <person name="Zavolan M."/>
            <person name="Davis M.J."/>
            <person name="Wilming L.G."/>
            <person name="Aidinis V."/>
            <person name="Allen J.E."/>
            <person name="Ambesi-Impiombato A."/>
            <person name="Apweiler R."/>
            <person name="Aturaliya R.N."/>
            <person name="Bailey T.L."/>
            <person name="Bansal M."/>
            <person name="Baxter L."/>
            <person name="Beisel K.W."/>
            <person name="Bersano T."/>
            <person name="Bono H."/>
            <person name="Chalk A.M."/>
            <person name="Chiu K.P."/>
            <person name="Choudhary V."/>
            <person name="Christoffels A."/>
            <person name="Clutterbuck D.R."/>
            <person name="Crowe M.L."/>
            <person name="Dalla E."/>
            <person name="Dalrymple B.P."/>
            <person name="de Bono B."/>
            <person name="Della Gatta G."/>
            <person name="di Bernardo D."/>
            <person name="Down T."/>
            <person name="Engstrom P."/>
            <person name="Fagiolini M."/>
            <person name="Faulkner G."/>
            <person name="Fletcher C.F."/>
            <person name="Fukushima T."/>
            <person name="Furuno M."/>
            <person name="Futaki S."/>
            <person name="Gariboldi M."/>
            <person name="Georgii-Hemming P."/>
            <person name="Gingeras T.R."/>
            <person name="Gojobori T."/>
            <person name="Green R.E."/>
            <person name="Gustincich S."/>
            <person name="Harbers M."/>
            <person name="Hayashi Y."/>
            <person name="Hensch T.K."/>
            <person name="Hirokawa N."/>
            <person name="Hill D."/>
            <person name="Huminiecki L."/>
            <person name="Iacono M."/>
            <person name="Ikeo K."/>
            <person name="Iwama A."/>
            <person name="Ishikawa T."/>
            <person name="Jakt M."/>
            <person name="Kanapin A."/>
            <person name="Katoh M."/>
            <person name="Kawasawa Y."/>
            <person name="Kelso J."/>
            <person name="Kitamura H."/>
            <person name="Kitano H."/>
            <person name="Kollias G."/>
            <person name="Krishnan S.P."/>
            <person name="Kruger A."/>
            <person name="Kummerfeld S.K."/>
            <person name="Kurochkin I.V."/>
            <person name="Lareau L.F."/>
            <person name="Lazarevic D."/>
            <person name="Lipovich L."/>
            <person name="Liu J."/>
            <person name="Liuni S."/>
            <person name="McWilliam S."/>
            <person name="Madan Babu M."/>
            <person name="Madera M."/>
            <person name="Marchionni L."/>
            <person name="Matsuda H."/>
            <person name="Matsuzawa S."/>
            <person name="Miki H."/>
            <person name="Mignone F."/>
            <person name="Miyake S."/>
            <person name="Morris K."/>
            <person name="Mottagui-Tabar S."/>
            <person name="Mulder N."/>
            <person name="Nakano N."/>
            <person name="Nakauchi H."/>
            <person name="Ng P."/>
            <person name="Nilsson R."/>
            <person name="Nishiguchi S."/>
            <person name="Nishikawa S."/>
            <person name="Nori F."/>
            <person name="Ohara O."/>
            <person name="Okazaki Y."/>
            <person name="Orlando V."/>
            <person name="Pang K.C."/>
            <person name="Pavan W.J."/>
            <person name="Pavesi G."/>
            <person name="Pesole G."/>
            <person name="Petrovsky N."/>
            <person name="Piazza S."/>
            <person name="Reed J."/>
            <person name="Reid J.F."/>
            <person name="Ring B.Z."/>
            <person name="Ringwald M."/>
            <person name="Rost B."/>
            <person name="Ruan Y."/>
            <person name="Salzberg S.L."/>
            <person name="Sandelin A."/>
            <person name="Schneider C."/>
            <person name="Schoenbach C."/>
            <person name="Sekiguchi K."/>
            <person name="Semple C.A."/>
            <person name="Seno S."/>
            <person name="Sessa L."/>
            <person name="Sheng Y."/>
            <person name="Shibata Y."/>
            <person name="Shimada H."/>
            <person name="Shimada K."/>
            <person name="Silva D."/>
            <person name="Sinclair B."/>
            <person name="Sperling S."/>
            <person name="Stupka E."/>
            <person name="Sugiura K."/>
            <person name="Sultana R."/>
            <person name="Takenaka Y."/>
            <person name="Taki K."/>
            <person name="Tammoja K."/>
            <person name="Tan S.L."/>
            <person name="Tang S."/>
            <person name="Taylor M.S."/>
            <person name="Tegner J."/>
            <person name="Teichmann S.A."/>
            <person name="Ueda H.R."/>
            <person name="van Nimwegen E."/>
            <person name="Verardo R."/>
            <person name="Wei C.L."/>
            <person name="Yagi K."/>
            <person name="Yamanishi H."/>
            <person name="Zabarovsky E."/>
            <person name="Zhu S."/>
            <person name="Zimmer A."/>
            <person name="Hide W."/>
            <person name="Bult C."/>
            <person name="Grimmond S.M."/>
            <person name="Teasdale R.D."/>
            <person name="Liu E.T."/>
            <person name="Brusic V."/>
            <person name="Quackenbush J."/>
            <person name="Wahlestedt C."/>
            <person name="Mattick J.S."/>
            <person name="Hume D.A."/>
            <person name="Kai C."/>
            <person name="Sasaki D."/>
            <person name="Tomaru Y."/>
            <person name="Fukuda S."/>
            <person name="Kanamori-Katayama M."/>
            <person name="Suzuki M."/>
            <person name="Aoki J."/>
            <person name="Arakawa T."/>
            <person name="Iida J."/>
            <person name="Imamura K."/>
            <person name="Itoh M."/>
            <person name="Kato T."/>
            <person name="Kawaji H."/>
            <person name="Kawagashira N."/>
            <person name="Kawashima T."/>
            <person name="Kojima M."/>
            <person name="Kondo S."/>
            <person name="Konno H."/>
            <person name="Nakano K."/>
            <person name="Ninomiya N."/>
            <person name="Nishio T."/>
            <person name="Okada M."/>
            <person name="Plessy C."/>
            <person name="Shibata K."/>
            <person name="Shiraki T."/>
            <person name="Suzuki S."/>
            <person name="Tagami M."/>
            <person name="Waki K."/>
            <person name="Watahiki A."/>
            <person name="Okamura-Oho Y."/>
            <person name="Suzuki H."/>
            <person name="Kawai J."/>
            <person name="Hayashizaki Y."/>
        </authorList>
    </citation>
    <scope>NUCLEOTIDE SEQUENCE [LARGE SCALE MRNA] (ISOFORM 1)</scope>
    <source>
        <strain>C57BL/6J</strain>
        <tissue>Embryo</tissue>
    </source>
</reference>
<reference key="3">
    <citation type="journal article" date="2004" name="Genome Res.">
        <title>The status, quality, and expansion of the NIH full-length cDNA project: the Mammalian Gene Collection (MGC).</title>
        <authorList>
            <consortium name="The MGC Project Team"/>
        </authorList>
    </citation>
    <scope>NUCLEOTIDE SEQUENCE [LARGE SCALE MRNA] (ISOFORM 2)</scope>
    <source>
        <strain>FVB/N</strain>
        <tissue>Mammary gland</tissue>
    </source>
</reference>
<reference key="4">
    <citation type="journal article" date="2013" name="Cell">
        <title>Dynamic readers for 5-(hydroxy)methylcytosine and its oxidized derivatives.</title>
        <authorList>
            <person name="Spruijt C.G."/>
            <person name="Gnerlich F."/>
            <person name="Smits A.H."/>
            <person name="Pfaffeneder T."/>
            <person name="Jansen P.W."/>
            <person name="Bauer C."/>
            <person name="Munzel M."/>
            <person name="Wagner M."/>
            <person name="Muller M."/>
            <person name="Khan F."/>
            <person name="Eberl H.C."/>
            <person name="Mensinga A."/>
            <person name="Brinkman A.B."/>
            <person name="Lephikov K."/>
            <person name="Muller U."/>
            <person name="Walter J."/>
            <person name="Boelens R."/>
            <person name="van Ingen H."/>
            <person name="Leonhardt H."/>
            <person name="Carell T."/>
            <person name="Vermeulen M."/>
        </authorList>
    </citation>
    <scope>FUNCTION</scope>
</reference>
<protein>
    <recommendedName>
        <fullName>Endonuclease 8-like 1</fullName>
        <ecNumber>3.2.2.-</ecNumber>
        <ecNumber>4.2.99.18</ecNumber>
    </recommendedName>
    <alternativeName>
        <fullName>DNA glycosylase/AP lyase Neil1</fullName>
    </alternativeName>
    <alternativeName>
        <fullName>DNA-(apurinic or apyrimidinic site) lyase Neil1</fullName>
    </alternativeName>
    <alternativeName>
        <fullName>Endonuclease VIII-like 1</fullName>
    </alternativeName>
    <alternativeName>
        <fullName>Nei homolog 1</fullName>
        <shortName>NEH1</shortName>
    </alternativeName>
    <alternativeName>
        <fullName>Nei-like protein 1</fullName>
    </alternativeName>
</protein>
<feature type="initiator methionine" description="Removed" evidence="1">
    <location>
        <position position="1"/>
    </location>
</feature>
<feature type="chain" id="PRO_0000170906" description="Endonuclease 8-like 1">
    <location>
        <begin position="2"/>
        <end position="389"/>
    </location>
</feature>
<feature type="region of interest" description="Disordered" evidence="3">
    <location>
        <begin position="278"/>
        <end position="389"/>
    </location>
</feature>
<feature type="compositionally biased region" description="Basic residues" evidence="3">
    <location>
        <begin position="322"/>
        <end position="333"/>
    </location>
</feature>
<feature type="compositionally biased region" description="Polar residues" evidence="3">
    <location>
        <begin position="336"/>
        <end position="351"/>
    </location>
</feature>
<feature type="compositionally biased region" description="Basic residues" evidence="3">
    <location>
        <begin position="357"/>
        <end position="373"/>
    </location>
</feature>
<feature type="compositionally biased region" description="Basic and acidic residues" evidence="3">
    <location>
        <begin position="374"/>
        <end position="389"/>
    </location>
</feature>
<feature type="active site" description="Schiff-base intermediate with DNA" evidence="7">
    <location>
        <position position="2"/>
    </location>
</feature>
<feature type="active site" description="Proton donor" evidence="7">
    <location>
        <position position="3"/>
    </location>
</feature>
<feature type="active site" description="Proton donor; for beta-elimination activity" evidence="7">
    <location>
        <position position="54"/>
    </location>
</feature>
<feature type="binding site" evidence="1">
    <location>
        <position position="176"/>
    </location>
    <ligand>
        <name>DNA</name>
        <dbReference type="ChEBI" id="CHEBI:16991"/>
    </ligand>
</feature>
<feature type="splice variant" id="VSP_012207" description="In isoform 2." evidence="6">
    <original>GKGYGPERGEEDFAAFRAWLRCYGVPGMSSLRDRHGRTIWFQGDPGPLAPKGGRSQKKKSQETQLGAEDRKEDLPLSSKSVSRMRRARKHPPKRIAQQSEGAGLQQNQETPTAPEKGKRRGQRASTGHRRRPKTIPDTRPREAGESSAS</original>
    <variation>EAWGGQDGRRPLP</variation>
    <location>
        <begin position="241"/>
        <end position="389"/>
    </location>
</feature>
<comment type="function">
    <text evidence="4 5">Involved in base excision repair of DNA damaged by oxidation or by mutagenic agents. Acts as a DNA glycosylase that recognizes and removes damaged bases. Has a preference for oxidized pyrimidines, such as thymine glycol, formamidopyrimidine (Fapy) and 5-hydroxyuracil. Has marginal activity towards 8-oxoguanine. Has AP (apurinic/apyrimidinic) lyase activity and introduces nicks in the DNA strand. Cleaves the DNA backbone by beta-delta elimination to generate a single-strand break at the site of the removed base with both 3'- and 5'-phosphates. Has DNA glycosylase/lyase activity towards mismatched uracil and thymine, in particular in U:C and T:C mismatches. Specifically binds 5-hydroxymethylcytosine (5hmC), suggesting that it acts as a specific reader of 5hmC.</text>
</comment>
<comment type="catalytic activity">
    <reaction evidence="2">
        <text>2'-deoxyribonucleotide-(2'-deoxyribose 5'-phosphate)-2'-deoxyribonucleotide-DNA = a 3'-end 2'-deoxyribonucleotide-(2,3-dehydro-2,3-deoxyribose 5'-phosphate)-DNA + a 5'-end 5'-phospho-2'-deoxyribonucleoside-DNA + H(+)</text>
        <dbReference type="Rhea" id="RHEA:66592"/>
        <dbReference type="Rhea" id="RHEA-COMP:13180"/>
        <dbReference type="Rhea" id="RHEA-COMP:16897"/>
        <dbReference type="Rhea" id="RHEA-COMP:17067"/>
        <dbReference type="ChEBI" id="CHEBI:15378"/>
        <dbReference type="ChEBI" id="CHEBI:136412"/>
        <dbReference type="ChEBI" id="CHEBI:157695"/>
        <dbReference type="ChEBI" id="CHEBI:167181"/>
        <dbReference type="EC" id="4.2.99.18"/>
    </reaction>
</comment>
<comment type="subcellular location">
    <subcellularLocation>
        <location>Cytoplasm</location>
        <location>Cytoskeleton</location>
        <location>Microtubule organizing center</location>
        <location>Centrosome</location>
    </subcellularLocation>
    <subcellularLocation>
        <location>Nucleus</location>
    </subcellularLocation>
    <subcellularLocation>
        <location>Chromosome</location>
    </subcellularLocation>
    <text evidence="1">During mitosis, associates with centrosomes and condensed chromatin.</text>
</comment>
<comment type="alternative products">
    <event type="alternative splicing"/>
    <isoform>
        <id>Q8K4Q6-1</id>
        <name>1</name>
        <sequence type="displayed"/>
    </isoform>
    <isoform>
        <id>Q8K4Q6-2</id>
        <name>2</name>
        <sequence type="described" ref="VSP_012207"/>
    </isoform>
</comment>
<comment type="tissue specificity">
    <text evidence="4">Detected in heart, spleen and lung.</text>
</comment>
<comment type="induction">
    <text evidence="1">Up-regulated during S-phase.</text>
</comment>
<comment type="similarity">
    <text evidence="2">Belongs to the FPG family.</text>
</comment>
<comment type="sequence caution" evidence="7">
    <conflict type="frameshift">
        <sequence resource="EMBL-CDS" id="BAB28790"/>
    </conflict>
</comment>
<keyword id="KW-0025">Alternative splicing</keyword>
<keyword id="KW-0158">Chromosome</keyword>
<keyword id="KW-0963">Cytoplasm</keyword>
<keyword id="KW-0206">Cytoskeleton</keyword>
<keyword id="KW-0227">DNA damage</keyword>
<keyword id="KW-0234">DNA repair</keyword>
<keyword id="KW-0238">DNA-binding</keyword>
<keyword id="KW-0326">Glycosidase</keyword>
<keyword id="KW-0378">Hydrolase</keyword>
<keyword id="KW-0456">Lyase</keyword>
<keyword id="KW-0511">Multifunctional enzyme</keyword>
<keyword id="KW-0539">Nucleus</keyword>
<keyword id="KW-1185">Reference proteome</keyword>
<evidence type="ECO:0000250" key="1"/>
<evidence type="ECO:0000255" key="2">
    <source>
        <dbReference type="PROSITE-ProRule" id="PRU00392"/>
    </source>
</evidence>
<evidence type="ECO:0000256" key="3">
    <source>
        <dbReference type="SAM" id="MobiDB-lite"/>
    </source>
</evidence>
<evidence type="ECO:0000269" key="4">
    <source>
    </source>
</evidence>
<evidence type="ECO:0000269" key="5">
    <source>
    </source>
</evidence>
<evidence type="ECO:0000303" key="6">
    <source>
    </source>
</evidence>
<evidence type="ECO:0000305" key="7"/>
<dbReference type="EC" id="3.2.2.-"/>
<dbReference type="EC" id="4.2.99.18"/>
<dbReference type="EMBL" id="AB079069">
    <property type="protein sequence ID" value="BAC06477.1"/>
    <property type="molecule type" value="mRNA"/>
</dbReference>
<dbReference type="EMBL" id="AK013322">
    <property type="protein sequence ID" value="BAB28790.1"/>
    <property type="status" value="ALT_FRAME"/>
    <property type="molecule type" value="mRNA"/>
</dbReference>
<dbReference type="EMBL" id="BC043297">
    <property type="protein sequence ID" value="AAH43297.1"/>
    <property type="molecule type" value="mRNA"/>
</dbReference>
<dbReference type="CCDS" id="CCDS23217.1">
    <molecule id="Q8K4Q6-1"/>
</dbReference>
<dbReference type="RefSeq" id="NP_082623.1">
    <molecule id="Q8K4Q6-1"/>
    <property type="nucleotide sequence ID" value="NM_028347.3"/>
</dbReference>
<dbReference type="RefSeq" id="XP_006511548.1">
    <molecule id="Q8K4Q6-1"/>
    <property type="nucleotide sequence ID" value="XM_006511485.5"/>
</dbReference>
<dbReference type="RefSeq" id="XP_006511549.1">
    <molecule id="Q8K4Q6-1"/>
    <property type="nucleotide sequence ID" value="XM_006511486.4"/>
</dbReference>
<dbReference type="RefSeq" id="XP_011241120.1">
    <property type="nucleotide sequence ID" value="XM_011242818.2"/>
</dbReference>
<dbReference type="SMR" id="Q8K4Q6"/>
<dbReference type="BioGRID" id="215559">
    <property type="interactions" value="1"/>
</dbReference>
<dbReference type="FunCoup" id="Q8K4Q6">
    <property type="interactions" value="1611"/>
</dbReference>
<dbReference type="STRING" id="10090.ENSMUSP00000139917"/>
<dbReference type="PhosphoSitePlus" id="Q8K4Q6"/>
<dbReference type="PaxDb" id="10090-ENSMUSP00000139917"/>
<dbReference type="PeptideAtlas" id="Q8K4Q6"/>
<dbReference type="ProteomicsDB" id="287357">
    <molecule id="Q8K4Q6-1"/>
</dbReference>
<dbReference type="ProteomicsDB" id="287358">
    <molecule id="Q8K4Q6-2"/>
</dbReference>
<dbReference type="Pumba" id="Q8K4Q6"/>
<dbReference type="Antibodypedia" id="27258">
    <property type="antibodies" value="310 antibodies from 32 providers"/>
</dbReference>
<dbReference type="Ensembl" id="ENSMUST00000034842.5">
    <molecule id="Q8K4Q6-1"/>
    <property type="protein sequence ID" value="ENSMUSP00000034842.5"/>
    <property type="gene ID" value="ENSMUSG00000032298.14"/>
</dbReference>
<dbReference type="Ensembl" id="ENSMUST00000186410.7">
    <molecule id="Q8K4Q6-1"/>
    <property type="protein sequence ID" value="ENSMUSP00000141048.2"/>
    <property type="gene ID" value="ENSMUSG00000032298.14"/>
</dbReference>
<dbReference type="Ensembl" id="ENSMUST00000190245.7">
    <molecule id="Q8K4Q6-1"/>
    <property type="protein sequence ID" value="ENSMUSP00000139917.2"/>
    <property type="gene ID" value="ENSMUSG00000032298.14"/>
</dbReference>
<dbReference type="GeneID" id="72774"/>
<dbReference type="KEGG" id="mmu:72774"/>
<dbReference type="UCSC" id="uc009puh.1">
    <molecule id="Q8K4Q6-1"/>
    <property type="organism name" value="mouse"/>
</dbReference>
<dbReference type="UCSC" id="uc009puk.1">
    <molecule id="Q8K4Q6-2"/>
    <property type="organism name" value="mouse"/>
</dbReference>
<dbReference type="AGR" id="MGI:1920024"/>
<dbReference type="CTD" id="79661"/>
<dbReference type="MGI" id="MGI:1920024">
    <property type="gene designation" value="Neil1"/>
</dbReference>
<dbReference type="VEuPathDB" id="HostDB:ENSMUSG00000032298"/>
<dbReference type="eggNOG" id="ENOG502QSPK">
    <property type="taxonomic scope" value="Eukaryota"/>
</dbReference>
<dbReference type="GeneTree" id="ENSGT00940000153230"/>
<dbReference type="HOGENOM" id="CLU_051284_0_0_1"/>
<dbReference type="InParanoid" id="Q8K4Q6"/>
<dbReference type="OMA" id="IMFEYKS"/>
<dbReference type="OrthoDB" id="6260718at2759"/>
<dbReference type="PhylomeDB" id="Q8K4Q6"/>
<dbReference type="TreeFam" id="TF333272"/>
<dbReference type="Reactome" id="R-MMU-110328">
    <property type="pathway name" value="Recognition and association of DNA glycosylase with site containing an affected pyrimidine"/>
</dbReference>
<dbReference type="Reactome" id="R-MMU-110329">
    <property type="pathway name" value="Cleavage of the damaged pyrimidine"/>
</dbReference>
<dbReference type="Reactome" id="R-MMU-5649702">
    <property type="pathway name" value="APEX1-Independent Resolution of AP Sites via the Single Nucleotide Replacement Pathway"/>
</dbReference>
<dbReference type="BioGRID-ORCS" id="72774">
    <property type="hits" value="1 hit in 111 CRISPR screens"/>
</dbReference>
<dbReference type="ChiTaRS" id="Neil1">
    <property type="organism name" value="mouse"/>
</dbReference>
<dbReference type="PRO" id="PR:Q8K4Q6"/>
<dbReference type="Proteomes" id="UP000000589">
    <property type="component" value="Chromosome 9"/>
</dbReference>
<dbReference type="RNAct" id="Q8K4Q6">
    <property type="molecule type" value="protein"/>
</dbReference>
<dbReference type="Bgee" id="ENSMUSG00000032298">
    <property type="expression patterns" value="Expressed in mesenteric lymph node and 212 other cell types or tissues"/>
</dbReference>
<dbReference type="GO" id="GO:0005813">
    <property type="term" value="C:centrosome"/>
    <property type="evidence" value="ECO:0007669"/>
    <property type="project" value="UniProtKB-SubCell"/>
</dbReference>
<dbReference type="GO" id="GO:0005694">
    <property type="term" value="C:chromosome"/>
    <property type="evidence" value="ECO:0007669"/>
    <property type="project" value="UniProtKB-SubCell"/>
</dbReference>
<dbReference type="GO" id="GO:0005737">
    <property type="term" value="C:cytoplasm"/>
    <property type="evidence" value="ECO:0007669"/>
    <property type="project" value="UniProtKB-KW"/>
</dbReference>
<dbReference type="GO" id="GO:0005654">
    <property type="term" value="C:nucleoplasm"/>
    <property type="evidence" value="ECO:0007669"/>
    <property type="project" value="Ensembl"/>
</dbReference>
<dbReference type="GO" id="GO:0005634">
    <property type="term" value="C:nucleus"/>
    <property type="evidence" value="ECO:0000314"/>
    <property type="project" value="MGI"/>
</dbReference>
<dbReference type="GO" id="GO:0140078">
    <property type="term" value="F:class I DNA-(apurinic or apyrimidinic site) endonuclease activity"/>
    <property type="evidence" value="ECO:0007669"/>
    <property type="project" value="UniProtKB-EC"/>
</dbReference>
<dbReference type="GO" id="GO:0003684">
    <property type="term" value="F:damaged DNA binding"/>
    <property type="evidence" value="ECO:0007669"/>
    <property type="project" value="InterPro"/>
</dbReference>
<dbReference type="GO" id="GO:0019104">
    <property type="term" value="F:DNA N-glycosylase activity"/>
    <property type="evidence" value="ECO:0000314"/>
    <property type="project" value="MGI"/>
</dbReference>
<dbReference type="GO" id="GO:0016829">
    <property type="term" value="F:lyase activity"/>
    <property type="evidence" value="ECO:0000314"/>
    <property type="project" value="MGI"/>
</dbReference>
<dbReference type="GO" id="GO:0008270">
    <property type="term" value="F:zinc ion binding"/>
    <property type="evidence" value="ECO:0007669"/>
    <property type="project" value="InterPro"/>
</dbReference>
<dbReference type="GO" id="GO:0006284">
    <property type="term" value="P:base-excision repair"/>
    <property type="evidence" value="ECO:0007669"/>
    <property type="project" value="Ensembl"/>
</dbReference>
<dbReference type="GO" id="GO:0006281">
    <property type="term" value="P:DNA repair"/>
    <property type="evidence" value="ECO:0000314"/>
    <property type="project" value="MGI"/>
</dbReference>
<dbReference type="GO" id="GO:0006979">
    <property type="term" value="P:response to oxidative stress"/>
    <property type="evidence" value="ECO:0007669"/>
    <property type="project" value="Ensembl"/>
</dbReference>
<dbReference type="FunFam" id="1.10.8.50:FF:000007">
    <property type="entry name" value="endonuclease 8-like 1 isoform X1"/>
    <property type="match status" value="1"/>
</dbReference>
<dbReference type="FunFam" id="3.20.190.10:FF:000003">
    <property type="entry name" value="endonuclease 8-like 1 isoform X1"/>
    <property type="match status" value="1"/>
</dbReference>
<dbReference type="Gene3D" id="1.10.8.50">
    <property type="match status" value="1"/>
</dbReference>
<dbReference type="Gene3D" id="3.20.190.10">
    <property type="entry name" value="MutM-like, N-terminal"/>
    <property type="match status" value="1"/>
</dbReference>
<dbReference type="InterPro" id="IPR015886">
    <property type="entry name" value="DNA_glyclase/AP_lyase_DNA-bd"/>
</dbReference>
<dbReference type="InterPro" id="IPR015371">
    <property type="entry name" value="Endonuclease-VIII_DNA-bd"/>
</dbReference>
<dbReference type="InterPro" id="IPR012319">
    <property type="entry name" value="FPG_cat"/>
</dbReference>
<dbReference type="InterPro" id="IPR035937">
    <property type="entry name" value="MutM-like_N-ter"/>
</dbReference>
<dbReference type="InterPro" id="IPR010979">
    <property type="entry name" value="Ribosomal_uS13-like_H2TH"/>
</dbReference>
<dbReference type="PANTHER" id="PTHR22993:SF27">
    <property type="entry name" value="ENDONUCLEASE 8-LIKE 1"/>
    <property type="match status" value="1"/>
</dbReference>
<dbReference type="PANTHER" id="PTHR22993">
    <property type="entry name" value="FORMAMIDOPYRIMIDINE-DNA GLYCOSYLASE"/>
    <property type="match status" value="1"/>
</dbReference>
<dbReference type="Pfam" id="PF01149">
    <property type="entry name" value="Fapy_DNA_glyco"/>
    <property type="match status" value="1"/>
</dbReference>
<dbReference type="Pfam" id="PF09292">
    <property type="entry name" value="Neil1-DNA_bind"/>
    <property type="match status" value="1"/>
</dbReference>
<dbReference type="SMART" id="SM00898">
    <property type="entry name" value="Fapy_DNA_glyco"/>
    <property type="match status" value="1"/>
</dbReference>
<dbReference type="SMART" id="SM01232">
    <property type="entry name" value="H2TH"/>
    <property type="match status" value="1"/>
</dbReference>
<dbReference type="SUPFAM" id="SSF57716">
    <property type="entry name" value="Glucocorticoid receptor-like (DNA-binding domain)"/>
    <property type="match status" value="1"/>
</dbReference>
<dbReference type="SUPFAM" id="SSF81624">
    <property type="entry name" value="N-terminal domain of MutM-like DNA repair proteins"/>
    <property type="match status" value="1"/>
</dbReference>
<dbReference type="SUPFAM" id="SSF46946">
    <property type="entry name" value="S13-like H2TH domain"/>
    <property type="match status" value="1"/>
</dbReference>
<dbReference type="PROSITE" id="PS51068">
    <property type="entry name" value="FPG_CAT"/>
    <property type="match status" value="1"/>
</dbReference>
<organism>
    <name type="scientific">Mus musculus</name>
    <name type="common">Mouse</name>
    <dbReference type="NCBI Taxonomy" id="10090"/>
    <lineage>
        <taxon>Eukaryota</taxon>
        <taxon>Metazoa</taxon>
        <taxon>Chordata</taxon>
        <taxon>Craniata</taxon>
        <taxon>Vertebrata</taxon>
        <taxon>Euteleostomi</taxon>
        <taxon>Mammalia</taxon>
        <taxon>Eutheria</taxon>
        <taxon>Euarchontoglires</taxon>
        <taxon>Glires</taxon>
        <taxon>Rodentia</taxon>
        <taxon>Myomorpha</taxon>
        <taxon>Muroidea</taxon>
        <taxon>Muridae</taxon>
        <taxon>Murinae</taxon>
        <taxon>Mus</taxon>
        <taxon>Mus</taxon>
    </lineage>
</organism>
<gene>
    <name type="primary">Neil1</name>
    <name type="synonym">Nei1</name>
</gene>